<accession>Q9LGZ2</accession>
<accession>A0A0P0V1J9</accession>
<name>LCYD1_ORYSJ</name>
<keyword id="KW-0456">Lyase</keyword>
<keyword id="KW-0663">Pyridoxal phosphate</keyword>
<keyword id="KW-1185">Reference proteome</keyword>
<proteinExistence type="evidence at transcript level"/>
<protein>
    <recommendedName>
        <fullName>Putative L-cysteine desulfhydrase 1</fullName>
        <ecNumber>4.4.1.28</ecNumber>
    </recommendedName>
    <alternativeName>
        <fullName>OsL-CDes1</fullName>
        <shortName>L-CDes1</shortName>
    </alternativeName>
</protein>
<organism>
    <name type="scientific">Oryza sativa subsp. japonica</name>
    <name type="common">Rice</name>
    <dbReference type="NCBI Taxonomy" id="39947"/>
    <lineage>
        <taxon>Eukaryota</taxon>
        <taxon>Viridiplantae</taxon>
        <taxon>Streptophyta</taxon>
        <taxon>Embryophyta</taxon>
        <taxon>Tracheophyta</taxon>
        <taxon>Spermatophyta</taxon>
        <taxon>Magnoliopsida</taxon>
        <taxon>Liliopsida</taxon>
        <taxon>Poales</taxon>
        <taxon>Poaceae</taxon>
        <taxon>BOP clade</taxon>
        <taxon>Oryzoideae</taxon>
        <taxon>Oryzeae</taxon>
        <taxon>Oryzinae</taxon>
        <taxon>Oryza</taxon>
        <taxon>Oryza sativa</taxon>
    </lineage>
</organism>
<reference key="1">
    <citation type="journal article" date="2002" name="Nature">
        <title>The genome sequence and structure of rice chromosome 1.</title>
        <authorList>
            <person name="Sasaki T."/>
            <person name="Matsumoto T."/>
            <person name="Yamamoto K."/>
            <person name="Sakata K."/>
            <person name="Baba T."/>
            <person name="Katayose Y."/>
            <person name="Wu J."/>
            <person name="Niimura Y."/>
            <person name="Cheng Z."/>
            <person name="Nagamura Y."/>
            <person name="Antonio B.A."/>
            <person name="Kanamori H."/>
            <person name="Hosokawa S."/>
            <person name="Masukawa M."/>
            <person name="Arikawa K."/>
            <person name="Chiden Y."/>
            <person name="Hayashi M."/>
            <person name="Okamoto M."/>
            <person name="Ando T."/>
            <person name="Aoki H."/>
            <person name="Arita K."/>
            <person name="Hamada M."/>
            <person name="Harada C."/>
            <person name="Hijishita S."/>
            <person name="Honda M."/>
            <person name="Ichikawa Y."/>
            <person name="Idonuma A."/>
            <person name="Iijima M."/>
            <person name="Ikeda M."/>
            <person name="Ikeno M."/>
            <person name="Ito S."/>
            <person name="Ito T."/>
            <person name="Ito Y."/>
            <person name="Ito Y."/>
            <person name="Iwabuchi A."/>
            <person name="Kamiya K."/>
            <person name="Karasawa W."/>
            <person name="Katagiri S."/>
            <person name="Kikuta A."/>
            <person name="Kobayashi N."/>
            <person name="Kono I."/>
            <person name="Machita K."/>
            <person name="Maehara T."/>
            <person name="Mizuno H."/>
            <person name="Mizubayashi T."/>
            <person name="Mukai Y."/>
            <person name="Nagasaki H."/>
            <person name="Nakashima M."/>
            <person name="Nakama Y."/>
            <person name="Nakamichi Y."/>
            <person name="Nakamura M."/>
            <person name="Namiki N."/>
            <person name="Negishi M."/>
            <person name="Ohta I."/>
            <person name="Ono N."/>
            <person name="Saji S."/>
            <person name="Sakai K."/>
            <person name="Shibata M."/>
            <person name="Shimokawa T."/>
            <person name="Shomura A."/>
            <person name="Song J."/>
            <person name="Takazaki Y."/>
            <person name="Terasawa K."/>
            <person name="Tsuji K."/>
            <person name="Waki K."/>
            <person name="Yamagata H."/>
            <person name="Yamane H."/>
            <person name="Yoshiki S."/>
            <person name="Yoshihara R."/>
            <person name="Yukawa K."/>
            <person name="Zhong H."/>
            <person name="Iwama H."/>
            <person name="Endo T."/>
            <person name="Ito H."/>
            <person name="Hahn J.H."/>
            <person name="Kim H.-I."/>
            <person name="Eun M.-Y."/>
            <person name="Yano M."/>
            <person name="Jiang J."/>
            <person name="Gojobori T."/>
        </authorList>
    </citation>
    <scope>NUCLEOTIDE SEQUENCE [LARGE SCALE GENOMIC DNA]</scope>
    <source>
        <strain>cv. Nipponbare</strain>
    </source>
</reference>
<reference key="2">
    <citation type="journal article" date="2005" name="Nature">
        <title>The map-based sequence of the rice genome.</title>
        <authorList>
            <consortium name="International rice genome sequencing project (IRGSP)"/>
        </authorList>
    </citation>
    <scope>NUCLEOTIDE SEQUENCE [LARGE SCALE GENOMIC DNA]</scope>
    <source>
        <strain>cv. Nipponbare</strain>
    </source>
</reference>
<reference key="3">
    <citation type="journal article" date="2008" name="Nucleic Acids Res.">
        <title>The rice annotation project database (RAP-DB): 2008 update.</title>
        <authorList>
            <consortium name="The rice annotation project (RAP)"/>
        </authorList>
    </citation>
    <scope>GENOME REANNOTATION</scope>
    <source>
        <strain>cv. Nipponbare</strain>
    </source>
</reference>
<reference key="4">
    <citation type="journal article" date="2013" name="Rice">
        <title>Improvement of the Oryza sativa Nipponbare reference genome using next generation sequence and optical map data.</title>
        <authorList>
            <person name="Kawahara Y."/>
            <person name="de la Bastide M."/>
            <person name="Hamilton J.P."/>
            <person name="Kanamori H."/>
            <person name="McCombie W.R."/>
            <person name="Ouyang S."/>
            <person name="Schwartz D.C."/>
            <person name="Tanaka T."/>
            <person name="Wu J."/>
            <person name="Zhou S."/>
            <person name="Childs K.L."/>
            <person name="Davidson R.M."/>
            <person name="Lin H."/>
            <person name="Quesada-Ocampo L."/>
            <person name="Vaillancourt B."/>
            <person name="Sakai H."/>
            <person name="Lee S.S."/>
            <person name="Kim J."/>
            <person name="Numa H."/>
            <person name="Itoh T."/>
            <person name="Buell C.R."/>
            <person name="Matsumoto T."/>
        </authorList>
    </citation>
    <scope>GENOME REANNOTATION</scope>
    <source>
        <strain>cv. Nipponbare</strain>
    </source>
</reference>
<reference key="5">
    <citation type="journal article" date="2003" name="Science">
        <title>Collection, mapping, and annotation of over 28,000 cDNA clones from japonica rice.</title>
        <authorList>
            <consortium name="The rice full-length cDNA consortium"/>
        </authorList>
    </citation>
    <scope>NUCLEOTIDE SEQUENCE [LARGE SCALE MRNA]</scope>
    <source>
        <strain>cv. Nipponbare</strain>
    </source>
</reference>
<feature type="chain" id="PRO_0000429505" description="Putative L-cysteine desulfhydrase 1">
    <location>
        <begin position="1"/>
        <end position="482"/>
    </location>
</feature>
<feature type="region of interest" description="Disordered" evidence="3">
    <location>
        <begin position="1"/>
        <end position="45"/>
    </location>
</feature>
<feature type="compositionally biased region" description="Acidic residues" evidence="3">
    <location>
        <begin position="1"/>
        <end position="10"/>
    </location>
</feature>
<feature type="compositionally biased region" description="Low complexity" evidence="3">
    <location>
        <begin position="11"/>
        <end position="22"/>
    </location>
</feature>
<feature type="modified residue" description="N6-(pyridoxal phosphate)lysine" evidence="1">
    <location>
        <position position="276"/>
    </location>
</feature>
<feature type="sequence conflict" description="In Ref. 5; AK069735." evidence="4" ref="5">
    <original>L</original>
    <variation>W</variation>
    <location>
        <position position="287"/>
    </location>
</feature>
<feature type="sequence conflict" description="In Ref. 5; AK069735." evidence="4" ref="5">
    <original>A</original>
    <variation>S</variation>
    <location>
        <position position="427"/>
    </location>
</feature>
<sequence length="482" mass="52121">MASIPPDDDAAAAAAAGAAENGYGNGKGNGNGPAPRPPPAKRPRSVISAAQIRAEFEHHEAGVARVNNGSFGCCPSSLLDAQARWQRLFIAQPDDFYFHALQPGLRRSRAAVAGLVNAGDVAEVSLVDNATTAAAIVLQHAAWSFAEGRFSRGDAVLMLHYAYGAVKKSIHAYVARAGATVVEVPLPFPVASADAIIAEFRAALDVAKAGGRKVRLAVIDHITSMPSVVIPVKELVAICREEGVDKVFIDAAHSIGQVPVDVRDIGADFYTSNLHKWFFCPPAVAFLHTRKDDPIASQLHHPVVSHEYGNGLPMESGWIGTRDYSAQLVVPESIDFVNRFEGGIEGIRSRNHEKVIEMGKMLAEAWGTFLGTPPELCGSMVMVGLPGCLGVESDDDVMRMRTMLRKDFMVEVPIYYNSRRVEAQEMAKDKNGDAVTGYVRISHQVYNVTEDYEKLRDAVNKLVADGFTSSKLRPSQKQETMA</sequence>
<gene>
    <name type="ordered locus">Os01g0290100</name>
    <name type="ordered locus">LOC_Os01g18640</name>
    <name type="ORF">P0469E05.28</name>
</gene>
<dbReference type="EC" id="4.4.1.28"/>
<dbReference type="EMBL" id="AP002480">
    <property type="protein sequence ID" value="BAA96579.1"/>
    <property type="molecule type" value="Genomic_DNA"/>
</dbReference>
<dbReference type="EMBL" id="AP008207">
    <property type="protein sequence ID" value="BAF04700.1"/>
    <property type="molecule type" value="Genomic_DNA"/>
</dbReference>
<dbReference type="EMBL" id="AP014957">
    <property type="protein sequence ID" value="BAS71653.1"/>
    <property type="molecule type" value="Genomic_DNA"/>
</dbReference>
<dbReference type="EMBL" id="AK069735">
    <property type="status" value="NOT_ANNOTATED_CDS"/>
    <property type="molecule type" value="mRNA"/>
</dbReference>
<dbReference type="RefSeq" id="XP_015613237.1">
    <property type="nucleotide sequence ID" value="XM_015757751.1"/>
</dbReference>
<dbReference type="SMR" id="Q9LGZ2"/>
<dbReference type="FunCoup" id="Q9LGZ2">
    <property type="interactions" value="854"/>
</dbReference>
<dbReference type="STRING" id="39947.Q9LGZ2"/>
<dbReference type="PaxDb" id="39947-Q9LGZ2"/>
<dbReference type="EnsemblPlants" id="Os01t0290100-01">
    <property type="protein sequence ID" value="Os01t0290100-01"/>
    <property type="gene ID" value="Os01g0290100"/>
</dbReference>
<dbReference type="Gramene" id="Os01t0290100-01">
    <property type="protein sequence ID" value="Os01t0290100-01"/>
    <property type="gene ID" value="Os01g0290100"/>
</dbReference>
<dbReference type="KEGG" id="dosa:Os01g0290100"/>
<dbReference type="eggNOG" id="KOG1549">
    <property type="taxonomic scope" value="Eukaryota"/>
</dbReference>
<dbReference type="HOGENOM" id="CLU_003433_3_2_1"/>
<dbReference type="InParanoid" id="Q9LGZ2"/>
<dbReference type="OMA" id="TGNCHKW"/>
<dbReference type="OrthoDB" id="5978656at2759"/>
<dbReference type="PlantReactome" id="R-OSA-1119612">
    <property type="pathway name" value="Cysteine degradation"/>
</dbReference>
<dbReference type="Proteomes" id="UP000000763">
    <property type="component" value="Chromosome 1"/>
</dbReference>
<dbReference type="Proteomes" id="UP000059680">
    <property type="component" value="Chromosome 1"/>
</dbReference>
<dbReference type="GO" id="GO:0080146">
    <property type="term" value="F:L-cysteine desulfhydrase activity"/>
    <property type="evidence" value="ECO:0007669"/>
    <property type="project" value="RHEA"/>
</dbReference>
<dbReference type="Gene3D" id="3.40.640.10">
    <property type="entry name" value="Type I PLP-dependent aspartate aminotransferase-like (Major domain)"/>
    <property type="match status" value="1"/>
</dbReference>
<dbReference type="InterPro" id="IPR000192">
    <property type="entry name" value="Aminotrans_V_dom"/>
</dbReference>
<dbReference type="InterPro" id="IPR015424">
    <property type="entry name" value="PyrdxlP-dep_Trfase"/>
</dbReference>
<dbReference type="InterPro" id="IPR015421">
    <property type="entry name" value="PyrdxlP-dep_Trfase_major"/>
</dbReference>
<dbReference type="PANTHER" id="PTHR43092:SF2">
    <property type="entry name" value="HERCYNYLCYSTEINE SULFOXIDE LYASE"/>
    <property type="match status" value="1"/>
</dbReference>
<dbReference type="PANTHER" id="PTHR43092">
    <property type="entry name" value="L-CYSTEINE DESULFHYDRASE"/>
    <property type="match status" value="1"/>
</dbReference>
<dbReference type="Pfam" id="PF00266">
    <property type="entry name" value="Aminotran_5"/>
    <property type="match status" value="1"/>
</dbReference>
<dbReference type="SUPFAM" id="SSF53383">
    <property type="entry name" value="PLP-dependent transferases"/>
    <property type="match status" value="1"/>
</dbReference>
<comment type="function">
    <text evidence="2">Catalyzes the production of hydrogen sulfide (H2S) from cysteine.</text>
</comment>
<comment type="catalytic activity">
    <reaction>
        <text>L-cysteine + H2O = hydrogen sulfide + pyruvate + NH4(+) + H(+)</text>
        <dbReference type="Rhea" id="RHEA:24931"/>
        <dbReference type="ChEBI" id="CHEBI:15361"/>
        <dbReference type="ChEBI" id="CHEBI:15377"/>
        <dbReference type="ChEBI" id="CHEBI:15378"/>
        <dbReference type="ChEBI" id="CHEBI:28938"/>
        <dbReference type="ChEBI" id="CHEBI:29919"/>
        <dbReference type="ChEBI" id="CHEBI:35235"/>
        <dbReference type="EC" id="4.4.1.28"/>
    </reaction>
</comment>
<comment type="cofactor">
    <cofactor evidence="1">
        <name>pyridoxal 5'-phosphate</name>
        <dbReference type="ChEBI" id="CHEBI:597326"/>
    </cofactor>
</comment>
<comment type="similarity">
    <text evidence="4">Belongs to the class-V pyridoxal-phosphate-dependent aminotransferase family.</text>
</comment>
<evidence type="ECO:0000250" key="1"/>
<evidence type="ECO:0000250" key="2">
    <source>
        <dbReference type="UniProtKB" id="Q9M1R1"/>
    </source>
</evidence>
<evidence type="ECO:0000256" key="3">
    <source>
        <dbReference type="SAM" id="MobiDB-lite"/>
    </source>
</evidence>
<evidence type="ECO:0000305" key="4"/>